<gene>
    <name evidence="1" type="primary">lpxA</name>
    <name type="ordered locus">THEYE_A0090</name>
</gene>
<name>LPXA_THEYD</name>
<accession>B5YHC0</accession>
<protein>
    <recommendedName>
        <fullName evidence="1">Acyl-[acyl-carrier-protein]--UDP-N-acetylglucosamine O-acyltransferase</fullName>
        <shortName evidence="1">UDP-N-acetylglucosamine acyltransferase</shortName>
        <ecNumber evidence="1">2.3.1.129</ecNumber>
    </recommendedName>
</protein>
<feature type="chain" id="PRO_1000190865" description="Acyl-[acyl-carrier-protein]--UDP-N-acetylglucosamine O-acyltransferase">
    <location>
        <begin position="1"/>
        <end position="258"/>
    </location>
</feature>
<reference key="1">
    <citation type="submission" date="2008-08" db="EMBL/GenBank/DDBJ databases">
        <title>The complete genome sequence of Thermodesulfovibrio yellowstonii strain ATCC 51303 / DSM 11347 / YP87.</title>
        <authorList>
            <person name="Dodson R.J."/>
            <person name="Durkin A.S."/>
            <person name="Wu M."/>
            <person name="Eisen J."/>
            <person name="Sutton G."/>
        </authorList>
    </citation>
    <scope>NUCLEOTIDE SEQUENCE [LARGE SCALE GENOMIC DNA]</scope>
    <source>
        <strain>ATCC 51303 / DSM 11347 / YP87</strain>
    </source>
</reference>
<sequence>MNEIHKTAIISPKAEIDKEVVIGPYCIIGDNVKIGRGTRLINHVQIEGITEIGQNCTIFPFTTIGFPPQDIKYKGEPTGVKIGNNNTIREYVTIHRASVAGDGWTVIGDSNFIMAYVHIAHDCKIGNSVIMANLATLAGHVQVEDFAFIGGLVAIHQFTRIGAYAMIGGFSGVGQDVPPFTMASGPRAKLYGLNSVGLKRRGFSDETINILKKAYKILFRDKLQLKEAIDKVKKELPQIPEIIHLLEFIEANKRGICR</sequence>
<keyword id="KW-0012">Acyltransferase</keyword>
<keyword id="KW-0963">Cytoplasm</keyword>
<keyword id="KW-0441">Lipid A biosynthesis</keyword>
<keyword id="KW-0444">Lipid biosynthesis</keyword>
<keyword id="KW-0443">Lipid metabolism</keyword>
<keyword id="KW-1185">Reference proteome</keyword>
<keyword id="KW-0677">Repeat</keyword>
<keyword id="KW-0808">Transferase</keyword>
<evidence type="ECO:0000255" key="1">
    <source>
        <dbReference type="HAMAP-Rule" id="MF_00387"/>
    </source>
</evidence>
<comment type="function">
    <text evidence="1">Involved in the biosynthesis of lipid A, a phosphorylated glycolipid that anchors the lipopolysaccharide to the outer membrane of the cell.</text>
</comment>
<comment type="catalytic activity">
    <reaction evidence="1">
        <text>a (3R)-hydroxyacyl-[ACP] + UDP-N-acetyl-alpha-D-glucosamine = a UDP-3-O-[(3R)-3-hydroxyacyl]-N-acetyl-alpha-D-glucosamine + holo-[ACP]</text>
        <dbReference type="Rhea" id="RHEA:67812"/>
        <dbReference type="Rhea" id="RHEA-COMP:9685"/>
        <dbReference type="Rhea" id="RHEA-COMP:9945"/>
        <dbReference type="ChEBI" id="CHEBI:57705"/>
        <dbReference type="ChEBI" id="CHEBI:64479"/>
        <dbReference type="ChEBI" id="CHEBI:78827"/>
        <dbReference type="ChEBI" id="CHEBI:173225"/>
        <dbReference type="EC" id="2.3.1.129"/>
    </reaction>
</comment>
<comment type="pathway">
    <text evidence="1">Glycolipid biosynthesis; lipid IV(A) biosynthesis; lipid IV(A) from (3R)-3-hydroxytetradecanoyl-[acyl-carrier-protein] and UDP-N-acetyl-alpha-D-glucosamine: step 1/6.</text>
</comment>
<comment type="subunit">
    <text evidence="1">Homotrimer.</text>
</comment>
<comment type="subcellular location">
    <subcellularLocation>
        <location evidence="1">Cytoplasm</location>
    </subcellularLocation>
</comment>
<comment type="similarity">
    <text evidence="1">Belongs to the transferase hexapeptide repeat family. LpxA subfamily.</text>
</comment>
<dbReference type="EC" id="2.3.1.129" evidence="1"/>
<dbReference type="EMBL" id="CP001147">
    <property type="protein sequence ID" value="ACI21530.1"/>
    <property type="molecule type" value="Genomic_DNA"/>
</dbReference>
<dbReference type="RefSeq" id="WP_012546244.1">
    <property type="nucleotide sequence ID" value="NC_011296.1"/>
</dbReference>
<dbReference type="RefSeq" id="YP_002247942.1">
    <property type="nucleotide sequence ID" value="NC_011296.1"/>
</dbReference>
<dbReference type="SMR" id="B5YHC0"/>
<dbReference type="FunCoup" id="B5YHC0">
    <property type="interactions" value="365"/>
</dbReference>
<dbReference type="STRING" id="289376.THEYE_A0090"/>
<dbReference type="EnsemblBacteria" id="ACI21530">
    <property type="protein sequence ID" value="ACI21530"/>
    <property type="gene ID" value="THEYE_A0090"/>
</dbReference>
<dbReference type="KEGG" id="tye:THEYE_A0090"/>
<dbReference type="PATRIC" id="fig|289376.4.peg.88"/>
<dbReference type="eggNOG" id="COG1043">
    <property type="taxonomic scope" value="Bacteria"/>
</dbReference>
<dbReference type="HOGENOM" id="CLU_061249_0_0_0"/>
<dbReference type="InParanoid" id="B5YHC0"/>
<dbReference type="OrthoDB" id="9807278at2"/>
<dbReference type="UniPathway" id="UPA00359">
    <property type="reaction ID" value="UER00477"/>
</dbReference>
<dbReference type="Proteomes" id="UP000000718">
    <property type="component" value="Chromosome"/>
</dbReference>
<dbReference type="GO" id="GO:0005737">
    <property type="term" value="C:cytoplasm"/>
    <property type="evidence" value="ECO:0007669"/>
    <property type="project" value="UniProtKB-SubCell"/>
</dbReference>
<dbReference type="GO" id="GO:0016020">
    <property type="term" value="C:membrane"/>
    <property type="evidence" value="ECO:0007669"/>
    <property type="project" value="GOC"/>
</dbReference>
<dbReference type="GO" id="GO:0008780">
    <property type="term" value="F:acyl-[acyl-carrier-protein]-UDP-N-acetylglucosamine O-acyltransferase activity"/>
    <property type="evidence" value="ECO:0007669"/>
    <property type="project" value="UniProtKB-UniRule"/>
</dbReference>
<dbReference type="GO" id="GO:0009245">
    <property type="term" value="P:lipid A biosynthetic process"/>
    <property type="evidence" value="ECO:0007669"/>
    <property type="project" value="UniProtKB-UniRule"/>
</dbReference>
<dbReference type="CDD" id="cd03351">
    <property type="entry name" value="LbH_UDP-GlcNAc_AT"/>
    <property type="match status" value="1"/>
</dbReference>
<dbReference type="Gene3D" id="2.160.10.10">
    <property type="entry name" value="Hexapeptide repeat proteins"/>
    <property type="match status" value="1"/>
</dbReference>
<dbReference type="Gene3D" id="1.20.1180.10">
    <property type="entry name" value="Udp N-acetylglucosamine O-acyltransferase, C-terminal domain"/>
    <property type="match status" value="1"/>
</dbReference>
<dbReference type="HAMAP" id="MF_00387">
    <property type="entry name" value="LpxA"/>
    <property type="match status" value="1"/>
</dbReference>
<dbReference type="InterPro" id="IPR029098">
    <property type="entry name" value="Acetyltransf_C"/>
</dbReference>
<dbReference type="InterPro" id="IPR037157">
    <property type="entry name" value="Acetyltransf_C_sf"/>
</dbReference>
<dbReference type="InterPro" id="IPR001451">
    <property type="entry name" value="Hexapep"/>
</dbReference>
<dbReference type="InterPro" id="IPR018357">
    <property type="entry name" value="Hexapep_transf_CS"/>
</dbReference>
<dbReference type="InterPro" id="IPR010137">
    <property type="entry name" value="Lipid_A_LpxA"/>
</dbReference>
<dbReference type="InterPro" id="IPR011004">
    <property type="entry name" value="Trimer_LpxA-like_sf"/>
</dbReference>
<dbReference type="NCBIfam" id="TIGR01852">
    <property type="entry name" value="lipid_A_lpxA"/>
    <property type="match status" value="1"/>
</dbReference>
<dbReference type="NCBIfam" id="NF003657">
    <property type="entry name" value="PRK05289.1"/>
    <property type="match status" value="1"/>
</dbReference>
<dbReference type="PANTHER" id="PTHR43480">
    <property type="entry name" value="ACYL-[ACYL-CARRIER-PROTEIN]--UDP-N-ACETYLGLUCOSAMINE O-ACYLTRANSFERASE"/>
    <property type="match status" value="1"/>
</dbReference>
<dbReference type="PANTHER" id="PTHR43480:SF1">
    <property type="entry name" value="ACYL-[ACYL-CARRIER-PROTEIN]--UDP-N-ACETYLGLUCOSAMINE O-ACYLTRANSFERASE, MITOCHONDRIAL-RELATED"/>
    <property type="match status" value="1"/>
</dbReference>
<dbReference type="Pfam" id="PF13720">
    <property type="entry name" value="Acetyltransf_11"/>
    <property type="match status" value="1"/>
</dbReference>
<dbReference type="Pfam" id="PF00132">
    <property type="entry name" value="Hexapep"/>
    <property type="match status" value="1"/>
</dbReference>
<dbReference type="PIRSF" id="PIRSF000456">
    <property type="entry name" value="UDP-GlcNAc_acltr"/>
    <property type="match status" value="1"/>
</dbReference>
<dbReference type="SUPFAM" id="SSF51161">
    <property type="entry name" value="Trimeric LpxA-like enzymes"/>
    <property type="match status" value="1"/>
</dbReference>
<dbReference type="PROSITE" id="PS00101">
    <property type="entry name" value="HEXAPEP_TRANSFERASES"/>
    <property type="match status" value="1"/>
</dbReference>
<organism>
    <name type="scientific">Thermodesulfovibrio yellowstonii (strain ATCC 51303 / DSM 11347 / YP87)</name>
    <dbReference type="NCBI Taxonomy" id="289376"/>
    <lineage>
        <taxon>Bacteria</taxon>
        <taxon>Pseudomonadati</taxon>
        <taxon>Nitrospirota</taxon>
        <taxon>Thermodesulfovibrionia</taxon>
        <taxon>Thermodesulfovibrionales</taxon>
        <taxon>Thermodesulfovibrionaceae</taxon>
        <taxon>Thermodesulfovibrio</taxon>
    </lineage>
</organism>
<proteinExistence type="inferred from homology"/>